<sequence>MLKNPATKYRSFKPVTLTDRQWPSRTITHPPIWMSTDLRDGNQSLFEPMDAQRKMRMFKTLVQIGFKEIEVAFPSASQTDFNFVRELIEGGHIPDDVTIEVLTQARDDLIERTFESLRGVPRAIVHLYNATAPEFRKIVFNLEKSGVKELAQNAARTMKRIAATMPETQFTFQYSPEVFSGTEIEFAKEVCDAVFDVWQPTPEHKAIVNLPATVEMSTPNIYADQIEWMHRNLARRDSLIISVHPHNDRGTAVAAAELAVMAGADRIEGCLFGNGERTGNVDLVTLALNLYTQGVDPGLDFSNINEVARTAEECTQLPIHPRHPYVGDLVFTAFSGSHQDAIKKGFAVQKPDAVWEVPYMPIDPADLGRTYDSVIRVNSQSGKGGIAYLLEQGYGVVLPRRLQVDFSSAVQRFTDDSGQEVTSAQIWELFQQEYVQNTAPIHYVGHSLSEREGRERIKLTVDIHGTRRVLTGEGNGPLDALMHAIGVPVRIQHYEERALTQGADARAVAVAEMAGADVTGSAFGVGIDANLVTASIRAVISGVNRAYARVNAQAQENFFDAAMNDAAESVGV</sequence>
<keyword id="KW-0028">Amino-acid biosynthesis</keyword>
<keyword id="KW-0100">Branched-chain amino acid biosynthesis</keyword>
<keyword id="KW-0963">Cytoplasm</keyword>
<keyword id="KW-0432">Leucine biosynthesis</keyword>
<keyword id="KW-0460">Magnesium</keyword>
<keyword id="KW-0479">Metal-binding</keyword>
<keyword id="KW-0808">Transferase</keyword>
<proteinExistence type="inferred from homology"/>
<name>LEU1_PARPJ</name>
<protein>
    <recommendedName>
        <fullName evidence="1">2-isopropylmalate synthase</fullName>
        <ecNumber evidence="1">2.3.3.13</ecNumber>
    </recommendedName>
    <alternativeName>
        <fullName evidence="1">Alpha-IPM synthase</fullName>
    </alternativeName>
    <alternativeName>
        <fullName evidence="1">Alpha-isopropylmalate synthase</fullName>
    </alternativeName>
</protein>
<evidence type="ECO:0000255" key="1">
    <source>
        <dbReference type="HAMAP-Rule" id="MF_00572"/>
    </source>
</evidence>
<gene>
    <name evidence="1" type="primary">leuA</name>
    <name type="ordered locus">Bphyt_2683</name>
</gene>
<feature type="chain" id="PRO_1000129500" description="2-isopropylmalate synthase">
    <location>
        <begin position="1"/>
        <end position="572"/>
    </location>
</feature>
<feature type="domain" description="Pyruvate carboxyltransferase" evidence="1">
    <location>
        <begin position="31"/>
        <end position="305"/>
    </location>
</feature>
<feature type="region of interest" description="Regulatory domain" evidence="1">
    <location>
        <begin position="437"/>
        <end position="572"/>
    </location>
</feature>
<feature type="binding site" evidence="1">
    <location>
        <position position="40"/>
    </location>
    <ligand>
        <name>Mg(2+)</name>
        <dbReference type="ChEBI" id="CHEBI:18420"/>
    </ligand>
</feature>
<feature type="binding site" evidence="1">
    <location>
        <position position="244"/>
    </location>
    <ligand>
        <name>Mg(2+)</name>
        <dbReference type="ChEBI" id="CHEBI:18420"/>
    </ligand>
</feature>
<feature type="binding site" evidence="1">
    <location>
        <position position="246"/>
    </location>
    <ligand>
        <name>Mg(2+)</name>
        <dbReference type="ChEBI" id="CHEBI:18420"/>
    </ligand>
</feature>
<feature type="binding site" evidence="1">
    <location>
        <position position="280"/>
    </location>
    <ligand>
        <name>Mg(2+)</name>
        <dbReference type="ChEBI" id="CHEBI:18420"/>
    </ligand>
</feature>
<accession>B2SXZ9</accession>
<comment type="function">
    <text evidence="1">Catalyzes the condensation of the acetyl group of acetyl-CoA with 3-methyl-2-oxobutanoate (2-ketoisovalerate) to form 3-carboxy-3-hydroxy-4-methylpentanoate (2-isopropylmalate).</text>
</comment>
<comment type="catalytic activity">
    <reaction evidence="1">
        <text>3-methyl-2-oxobutanoate + acetyl-CoA + H2O = (2S)-2-isopropylmalate + CoA + H(+)</text>
        <dbReference type="Rhea" id="RHEA:21524"/>
        <dbReference type="ChEBI" id="CHEBI:1178"/>
        <dbReference type="ChEBI" id="CHEBI:11851"/>
        <dbReference type="ChEBI" id="CHEBI:15377"/>
        <dbReference type="ChEBI" id="CHEBI:15378"/>
        <dbReference type="ChEBI" id="CHEBI:57287"/>
        <dbReference type="ChEBI" id="CHEBI:57288"/>
        <dbReference type="EC" id="2.3.3.13"/>
    </reaction>
</comment>
<comment type="cofactor">
    <cofactor evidence="1">
        <name>Mg(2+)</name>
        <dbReference type="ChEBI" id="CHEBI:18420"/>
    </cofactor>
</comment>
<comment type="pathway">
    <text evidence="1">Amino-acid biosynthesis; L-leucine biosynthesis; L-leucine from 3-methyl-2-oxobutanoate: step 1/4.</text>
</comment>
<comment type="subunit">
    <text evidence="1">Homodimer.</text>
</comment>
<comment type="subcellular location">
    <subcellularLocation>
        <location evidence="1">Cytoplasm</location>
    </subcellularLocation>
</comment>
<comment type="similarity">
    <text evidence="1">Belongs to the alpha-IPM synthase/homocitrate synthase family. LeuA type 2 subfamily.</text>
</comment>
<reference key="1">
    <citation type="journal article" date="2011" name="J. Bacteriol.">
        <title>Complete genome sequence of the plant growth-promoting endophyte Burkholderia phytofirmans strain PsJN.</title>
        <authorList>
            <person name="Weilharter A."/>
            <person name="Mitter B."/>
            <person name="Shin M.V."/>
            <person name="Chain P.S."/>
            <person name="Nowak J."/>
            <person name="Sessitsch A."/>
        </authorList>
    </citation>
    <scope>NUCLEOTIDE SEQUENCE [LARGE SCALE GENOMIC DNA]</scope>
    <source>
        <strain>DSM 17436 / LMG 22146 / PsJN</strain>
    </source>
</reference>
<dbReference type="EC" id="2.3.3.13" evidence="1"/>
<dbReference type="EMBL" id="CP001052">
    <property type="protein sequence ID" value="ACD17078.1"/>
    <property type="molecule type" value="Genomic_DNA"/>
</dbReference>
<dbReference type="RefSeq" id="WP_012433669.1">
    <property type="nucleotide sequence ID" value="NC_010681.1"/>
</dbReference>
<dbReference type="SMR" id="B2SXZ9"/>
<dbReference type="STRING" id="398527.Bphyt_2683"/>
<dbReference type="KEGG" id="bpy:Bphyt_2683"/>
<dbReference type="eggNOG" id="COG0119">
    <property type="taxonomic scope" value="Bacteria"/>
</dbReference>
<dbReference type="HOGENOM" id="CLU_004588_3_0_4"/>
<dbReference type="OrthoDB" id="9803573at2"/>
<dbReference type="UniPathway" id="UPA00048">
    <property type="reaction ID" value="UER00070"/>
</dbReference>
<dbReference type="Proteomes" id="UP000001739">
    <property type="component" value="Chromosome 1"/>
</dbReference>
<dbReference type="GO" id="GO:0005737">
    <property type="term" value="C:cytoplasm"/>
    <property type="evidence" value="ECO:0007669"/>
    <property type="project" value="UniProtKB-SubCell"/>
</dbReference>
<dbReference type="GO" id="GO:0003852">
    <property type="term" value="F:2-isopropylmalate synthase activity"/>
    <property type="evidence" value="ECO:0007669"/>
    <property type="project" value="UniProtKB-UniRule"/>
</dbReference>
<dbReference type="GO" id="GO:0003985">
    <property type="term" value="F:acetyl-CoA C-acetyltransferase activity"/>
    <property type="evidence" value="ECO:0007669"/>
    <property type="project" value="UniProtKB-UniRule"/>
</dbReference>
<dbReference type="GO" id="GO:0000287">
    <property type="term" value="F:magnesium ion binding"/>
    <property type="evidence" value="ECO:0007669"/>
    <property type="project" value="UniProtKB-UniRule"/>
</dbReference>
<dbReference type="GO" id="GO:0009098">
    <property type="term" value="P:L-leucine biosynthetic process"/>
    <property type="evidence" value="ECO:0007669"/>
    <property type="project" value="UniProtKB-UniRule"/>
</dbReference>
<dbReference type="CDD" id="cd07942">
    <property type="entry name" value="DRE_TIM_LeuA"/>
    <property type="match status" value="1"/>
</dbReference>
<dbReference type="FunFam" id="3.20.20.70:FF:000045">
    <property type="entry name" value="2-isopropylmalate synthase"/>
    <property type="match status" value="1"/>
</dbReference>
<dbReference type="Gene3D" id="3.30.160.270">
    <property type="match status" value="1"/>
</dbReference>
<dbReference type="Gene3D" id="3.20.20.70">
    <property type="entry name" value="Aldolase class I"/>
    <property type="match status" value="1"/>
</dbReference>
<dbReference type="HAMAP" id="MF_00572">
    <property type="entry name" value="LeuA_type2"/>
    <property type="match status" value="1"/>
</dbReference>
<dbReference type="InterPro" id="IPR013709">
    <property type="entry name" value="2-isopropylmalate_synth_dimer"/>
</dbReference>
<dbReference type="InterPro" id="IPR002034">
    <property type="entry name" value="AIPM/Hcit_synth_CS"/>
</dbReference>
<dbReference type="InterPro" id="IPR013785">
    <property type="entry name" value="Aldolase_TIM"/>
</dbReference>
<dbReference type="InterPro" id="IPR005668">
    <property type="entry name" value="IPM_Synthase"/>
</dbReference>
<dbReference type="InterPro" id="IPR054692">
    <property type="entry name" value="LeuA-like_post-cat"/>
</dbReference>
<dbReference type="InterPro" id="IPR036230">
    <property type="entry name" value="LeuA_allosteric_dom_sf"/>
</dbReference>
<dbReference type="InterPro" id="IPR039371">
    <property type="entry name" value="LeuA_N_DRE-TIM"/>
</dbReference>
<dbReference type="InterPro" id="IPR000891">
    <property type="entry name" value="PYR_CT"/>
</dbReference>
<dbReference type="NCBIfam" id="TIGR00970">
    <property type="entry name" value="leuA_yeast"/>
    <property type="match status" value="1"/>
</dbReference>
<dbReference type="NCBIfam" id="NF002991">
    <property type="entry name" value="PRK03739.1"/>
    <property type="match status" value="1"/>
</dbReference>
<dbReference type="PANTHER" id="PTHR46911">
    <property type="match status" value="1"/>
</dbReference>
<dbReference type="PANTHER" id="PTHR46911:SF1">
    <property type="entry name" value="2-ISOPROPYLMALATE SYNTHASE"/>
    <property type="match status" value="1"/>
</dbReference>
<dbReference type="Pfam" id="PF00682">
    <property type="entry name" value="HMGL-like"/>
    <property type="match status" value="1"/>
</dbReference>
<dbReference type="Pfam" id="PF22615">
    <property type="entry name" value="IPMS_D2"/>
    <property type="match status" value="1"/>
</dbReference>
<dbReference type="Pfam" id="PF08502">
    <property type="entry name" value="LeuA_dimer"/>
    <property type="match status" value="1"/>
</dbReference>
<dbReference type="SMART" id="SM00917">
    <property type="entry name" value="LeuA_dimer"/>
    <property type="match status" value="1"/>
</dbReference>
<dbReference type="SUPFAM" id="SSF110921">
    <property type="entry name" value="2-isopropylmalate synthase LeuA, allosteric (dimerisation) domain"/>
    <property type="match status" value="1"/>
</dbReference>
<dbReference type="SUPFAM" id="SSF51569">
    <property type="entry name" value="Aldolase"/>
    <property type="match status" value="1"/>
</dbReference>
<dbReference type="SUPFAM" id="SSF89000">
    <property type="entry name" value="post-HMGL domain-like"/>
    <property type="match status" value="1"/>
</dbReference>
<dbReference type="PROSITE" id="PS00815">
    <property type="entry name" value="AIPM_HOMOCIT_SYNTH_1"/>
    <property type="match status" value="1"/>
</dbReference>
<dbReference type="PROSITE" id="PS00816">
    <property type="entry name" value="AIPM_HOMOCIT_SYNTH_2"/>
    <property type="match status" value="1"/>
</dbReference>
<dbReference type="PROSITE" id="PS50991">
    <property type="entry name" value="PYR_CT"/>
    <property type="match status" value="1"/>
</dbReference>
<organism>
    <name type="scientific">Paraburkholderia phytofirmans (strain DSM 17436 / LMG 22146 / PsJN)</name>
    <name type="common">Burkholderia phytofirmans</name>
    <dbReference type="NCBI Taxonomy" id="398527"/>
    <lineage>
        <taxon>Bacteria</taxon>
        <taxon>Pseudomonadati</taxon>
        <taxon>Pseudomonadota</taxon>
        <taxon>Betaproteobacteria</taxon>
        <taxon>Burkholderiales</taxon>
        <taxon>Burkholderiaceae</taxon>
        <taxon>Paraburkholderia</taxon>
    </lineage>
</organism>